<organism>
    <name type="scientific">Yersinia pseudotuberculosis serotype I (strain IP32953)</name>
    <dbReference type="NCBI Taxonomy" id="273123"/>
    <lineage>
        <taxon>Bacteria</taxon>
        <taxon>Pseudomonadati</taxon>
        <taxon>Pseudomonadota</taxon>
        <taxon>Gammaproteobacteria</taxon>
        <taxon>Enterobacterales</taxon>
        <taxon>Yersiniaceae</taxon>
        <taxon>Yersinia</taxon>
    </lineage>
</organism>
<gene>
    <name evidence="1" type="primary">panD</name>
    <name type="ordered locus">YPTB0728</name>
</gene>
<accession>Q66EG5</accession>
<reference key="1">
    <citation type="journal article" date="2004" name="Proc. Natl. Acad. Sci. U.S.A.">
        <title>Insights into the evolution of Yersinia pestis through whole-genome comparison with Yersinia pseudotuberculosis.</title>
        <authorList>
            <person name="Chain P.S.G."/>
            <person name="Carniel E."/>
            <person name="Larimer F.W."/>
            <person name="Lamerdin J."/>
            <person name="Stoutland P.O."/>
            <person name="Regala W.M."/>
            <person name="Georgescu A.M."/>
            <person name="Vergez L.M."/>
            <person name="Land M.L."/>
            <person name="Motin V.L."/>
            <person name="Brubaker R.R."/>
            <person name="Fowler J."/>
            <person name="Hinnebusch J."/>
            <person name="Marceau M."/>
            <person name="Medigue C."/>
            <person name="Simonet M."/>
            <person name="Chenal-Francisque V."/>
            <person name="Souza B."/>
            <person name="Dacheux D."/>
            <person name="Elliott J.M."/>
            <person name="Derbise A."/>
            <person name="Hauser L.J."/>
            <person name="Garcia E."/>
        </authorList>
    </citation>
    <scope>NUCLEOTIDE SEQUENCE [LARGE SCALE GENOMIC DNA]</scope>
    <source>
        <strain>IP32953</strain>
    </source>
</reference>
<name>PAND_YERPS</name>
<comment type="function">
    <text evidence="1">Catalyzes the pyruvoyl-dependent decarboxylation of aspartate to produce beta-alanine.</text>
</comment>
<comment type="catalytic activity">
    <reaction evidence="1">
        <text>L-aspartate + H(+) = beta-alanine + CO2</text>
        <dbReference type="Rhea" id="RHEA:19497"/>
        <dbReference type="ChEBI" id="CHEBI:15378"/>
        <dbReference type="ChEBI" id="CHEBI:16526"/>
        <dbReference type="ChEBI" id="CHEBI:29991"/>
        <dbReference type="ChEBI" id="CHEBI:57966"/>
        <dbReference type="EC" id="4.1.1.11"/>
    </reaction>
</comment>
<comment type="cofactor">
    <cofactor evidence="1">
        <name>pyruvate</name>
        <dbReference type="ChEBI" id="CHEBI:15361"/>
    </cofactor>
    <text evidence="1">Binds 1 pyruvoyl group covalently per subunit.</text>
</comment>
<comment type="pathway">
    <text evidence="1">Cofactor biosynthesis; (R)-pantothenate biosynthesis; beta-alanine from L-aspartate: step 1/1.</text>
</comment>
<comment type="subunit">
    <text evidence="1">Heterooctamer of four alpha and four beta subunits.</text>
</comment>
<comment type="subcellular location">
    <subcellularLocation>
        <location evidence="1">Cytoplasm</location>
    </subcellularLocation>
</comment>
<comment type="PTM">
    <text evidence="1">Is synthesized initially as an inactive proenzyme, which is activated by self-cleavage at a specific serine bond to produce a beta-subunit with a hydroxyl group at its C-terminus and an alpha-subunit with a pyruvoyl group at its N-terminus.</text>
</comment>
<comment type="similarity">
    <text evidence="1">Belongs to the PanD family.</text>
</comment>
<keyword id="KW-0068">Autocatalytic cleavage</keyword>
<keyword id="KW-0963">Cytoplasm</keyword>
<keyword id="KW-0210">Decarboxylase</keyword>
<keyword id="KW-0456">Lyase</keyword>
<keyword id="KW-0566">Pantothenate biosynthesis</keyword>
<keyword id="KW-0670">Pyruvate</keyword>
<keyword id="KW-0704">Schiff base</keyword>
<keyword id="KW-0865">Zymogen</keyword>
<proteinExistence type="inferred from homology"/>
<dbReference type="EC" id="4.1.1.11" evidence="1"/>
<dbReference type="EMBL" id="BX936398">
    <property type="protein sequence ID" value="CAH19968.1"/>
    <property type="molecule type" value="Genomic_DNA"/>
</dbReference>
<dbReference type="RefSeq" id="WP_011191751.1">
    <property type="nucleotide sequence ID" value="NC_006155.1"/>
</dbReference>
<dbReference type="SMR" id="Q66EG5"/>
<dbReference type="GeneID" id="96664225"/>
<dbReference type="KEGG" id="ypo:BZ17_1827"/>
<dbReference type="KEGG" id="yps:YPTB0728"/>
<dbReference type="PATRIC" id="fig|273123.14.peg.1937"/>
<dbReference type="UniPathway" id="UPA00028">
    <property type="reaction ID" value="UER00002"/>
</dbReference>
<dbReference type="Proteomes" id="UP000001011">
    <property type="component" value="Chromosome"/>
</dbReference>
<dbReference type="GO" id="GO:0005829">
    <property type="term" value="C:cytosol"/>
    <property type="evidence" value="ECO:0007669"/>
    <property type="project" value="TreeGrafter"/>
</dbReference>
<dbReference type="GO" id="GO:0004068">
    <property type="term" value="F:aspartate 1-decarboxylase activity"/>
    <property type="evidence" value="ECO:0007669"/>
    <property type="project" value="UniProtKB-UniRule"/>
</dbReference>
<dbReference type="GO" id="GO:0006523">
    <property type="term" value="P:alanine biosynthetic process"/>
    <property type="evidence" value="ECO:0007669"/>
    <property type="project" value="InterPro"/>
</dbReference>
<dbReference type="GO" id="GO:0015940">
    <property type="term" value="P:pantothenate biosynthetic process"/>
    <property type="evidence" value="ECO:0007669"/>
    <property type="project" value="UniProtKB-UniRule"/>
</dbReference>
<dbReference type="CDD" id="cd06919">
    <property type="entry name" value="Asp_decarbox"/>
    <property type="match status" value="1"/>
</dbReference>
<dbReference type="FunFam" id="2.40.40.20:FF:000004">
    <property type="entry name" value="Aspartate 1-decarboxylase"/>
    <property type="match status" value="1"/>
</dbReference>
<dbReference type="Gene3D" id="2.40.40.20">
    <property type="match status" value="1"/>
</dbReference>
<dbReference type="HAMAP" id="MF_00446">
    <property type="entry name" value="PanD"/>
    <property type="match status" value="1"/>
</dbReference>
<dbReference type="InterPro" id="IPR009010">
    <property type="entry name" value="Asp_de-COase-like_dom_sf"/>
</dbReference>
<dbReference type="InterPro" id="IPR003190">
    <property type="entry name" value="Asp_decarbox"/>
</dbReference>
<dbReference type="NCBIfam" id="TIGR00223">
    <property type="entry name" value="panD"/>
    <property type="match status" value="1"/>
</dbReference>
<dbReference type="PANTHER" id="PTHR21012">
    <property type="entry name" value="ASPARTATE 1-DECARBOXYLASE"/>
    <property type="match status" value="1"/>
</dbReference>
<dbReference type="PANTHER" id="PTHR21012:SF0">
    <property type="entry name" value="ASPARTATE 1-DECARBOXYLASE"/>
    <property type="match status" value="1"/>
</dbReference>
<dbReference type="Pfam" id="PF02261">
    <property type="entry name" value="Asp_decarbox"/>
    <property type="match status" value="1"/>
</dbReference>
<dbReference type="PIRSF" id="PIRSF006246">
    <property type="entry name" value="Asp_decarbox"/>
    <property type="match status" value="1"/>
</dbReference>
<dbReference type="SUPFAM" id="SSF50692">
    <property type="entry name" value="ADC-like"/>
    <property type="match status" value="1"/>
</dbReference>
<protein>
    <recommendedName>
        <fullName evidence="1">Aspartate 1-decarboxylase</fullName>
        <ecNumber evidence="1">4.1.1.11</ecNumber>
    </recommendedName>
    <alternativeName>
        <fullName evidence="1">Aspartate alpha-decarboxylase</fullName>
    </alternativeName>
    <component>
        <recommendedName>
            <fullName evidence="1">Aspartate 1-decarboxylase beta chain</fullName>
        </recommendedName>
    </component>
    <component>
        <recommendedName>
            <fullName evidence="1">Aspartate 1-decarboxylase alpha chain</fullName>
        </recommendedName>
    </component>
</protein>
<sequence length="126" mass="13858">MIRTMLQGKLHRVKVTQADLHYEGSCAIDQDFLEAAGILEYEAIDIYNVDNGQRFSTYAIAAERGSRIISVNGAAARCACVGDKLIICSYVQMSDAAARLHHPKVAYFEGENQLQRKAKAVPVQVA</sequence>
<evidence type="ECO:0000255" key="1">
    <source>
        <dbReference type="HAMAP-Rule" id="MF_00446"/>
    </source>
</evidence>
<feature type="chain" id="PRO_0000023199" description="Aspartate 1-decarboxylase beta chain" evidence="1">
    <location>
        <begin position="1"/>
        <end position="24"/>
    </location>
</feature>
<feature type="chain" id="PRO_0000023200" description="Aspartate 1-decarboxylase alpha chain" evidence="1">
    <location>
        <begin position="25"/>
        <end position="126"/>
    </location>
</feature>
<feature type="active site" description="Schiff-base intermediate with substrate; via pyruvic acid" evidence="1">
    <location>
        <position position="25"/>
    </location>
</feature>
<feature type="active site" description="Proton donor" evidence="1">
    <location>
        <position position="58"/>
    </location>
</feature>
<feature type="binding site" evidence="1">
    <location>
        <position position="57"/>
    </location>
    <ligand>
        <name>substrate</name>
    </ligand>
</feature>
<feature type="binding site" evidence="1">
    <location>
        <begin position="73"/>
        <end position="75"/>
    </location>
    <ligand>
        <name>substrate</name>
    </ligand>
</feature>
<feature type="modified residue" description="Pyruvic acid (Ser)" evidence="1">
    <location>
        <position position="25"/>
    </location>
</feature>